<organism>
    <name type="scientific">Xenopus tropicalis</name>
    <name type="common">Western clawed frog</name>
    <name type="synonym">Silurana tropicalis</name>
    <dbReference type="NCBI Taxonomy" id="8364"/>
    <lineage>
        <taxon>Eukaryota</taxon>
        <taxon>Metazoa</taxon>
        <taxon>Chordata</taxon>
        <taxon>Craniata</taxon>
        <taxon>Vertebrata</taxon>
        <taxon>Euteleostomi</taxon>
        <taxon>Amphibia</taxon>
        <taxon>Batrachia</taxon>
        <taxon>Anura</taxon>
        <taxon>Pipoidea</taxon>
        <taxon>Pipidae</taxon>
        <taxon>Xenopodinae</taxon>
        <taxon>Xenopus</taxon>
        <taxon>Silurana</taxon>
    </lineage>
</organism>
<feature type="chain" id="PRO_0000325796" description="N(6)-adenosine-methyltransferase non-catalytic subunit METTL14">
    <location>
        <begin position="1"/>
        <end position="456"/>
    </location>
</feature>
<feature type="region of interest" description="Disordered" evidence="4">
    <location>
        <begin position="39"/>
        <end position="74"/>
    </location>
</feature>
<feature type="region of interest" description="Interaction with METTL3" evidence="2">
    <location>
        <begin position="135"/>
        <end position="136"/>
    </location>
</feature>
<feature type="region of interest" description="Interaction with METTL3" evidence="2">
    <location>
        <begin position="237"/>
        <end position="238"/>
    </location>
</feature>
<feature type="region of interest" description="Positively charged region required for RNA-binding" evidence="2">
    <location>
        <begin position="245"/>
        <end position="254"/>
    </location>
</feature>
<feature type="region of interest" description="Interaction with METTL3" evidence="2">
    <location>
        <begin position="255"/>
        <end position="258"/>
    </location>
</feature>
<feature type="region of interest" description="Interaction with METTL3" evidence="2">
    <location>
        <begin position="278"/>
        <end position="287"/>
    </location>
</feature>
<feature type="region of interest" description="Positively charged region required for RNA-binding" evidence="2">
    <location>
        <begin position="297"/>
        <end position="298"/>
    </location>
</feature>
<feature type="region of interest" description="Interaction with METTL3" evidence="2">
    <location>
        <begin position="308"/>
        <end position="312"/>
    </location>
</feature>
<feature type="region of interest" description="Disordered" evidence="4">
    <location>
        <begin position="395"/>
        <end position="456"/>
    </location>
</feature>
<feature type="compositionally biased region" description="Basic and acidic residues" evidence="4">
    <location>
        <begin position="39"/>
        <end position="51"/>
    </location>
</feature>
<feature type="compositionally biased region" description="Polar residues" evidence="4">
    <location>
        <begin position="52"/>
        <end position="61"/>
    </location>
</feature>
<feature type="compositionally biased region" description="Gly residues" evidence="4">
    <location>
        <begin position="410"/>
        <end position="421"/>
    </location>
</feature>
<feature type="compositionally biased region" description="Basic and acidic residues" evidence="4">
    <location>
        <begin position="423"/>
        <end position="441"/>
    </location>
</feature>
<feature type="site" description="Interaction with METTL3" evidence="2">
    <location>
        <position position="146"/>
    </location>
</feature>
<feature type="site" description="Interaction with METTL3" evidence="2">
    <location>
        <position position="242"/>
    </location>
</feature>
<feature type="site" description="Interaction with METTL3" evidence="2">
    <location>
        <position position="245"/>
    </location>
</feature>
<feature type="site" description="Interaction with METTL3" evidence="2">
    <location>
        <position position="298"/>
    </location>
</feature>
<gene>
    <name type="primary">mettl14</name>
</gene>
<proteinExistence type="evidence at transcript level"/>
<name>MET14_XENTR</name>
<keyword id="KW-0221">Differentiation</keyword>
<keyword id="KW-0539">Nucleus</keyword>
<keyword id="KW-1185">Reference proteome</keyword>
<keyword id="KW-0694">RNA-binding</keyword>
<keyword id="KW-0744">Spermatogenesis</keyword>
<accession>Q66KJ9</accession>
<dbReference type="EMBL" id="BC080361">
    <property type="protein sequence ID" value="AAH80361.1"/>
    <property type="molecule type" value="mRNA"/>
</dbReference>
<dbReference type="RefSeq" id="NP_001007920.1">
    <property type="nucleotide sequence ID" value="NM_001007919.1"/>
</dbReference>
<dbReference type="SMR" id="Q66KJ9"/>
<dbReference type="FunCoup" id="Q66KJ9">
    <property type="interactions" value="2939"/>
</dbReference>
<dbReference type="STRING" id="8364.ENSXETP00000008988"/>
<dbReference type="PaxDb" id="8364-ENSXETP00000008737"/>
<dbReference type="DNASU" id="493301"/>
<dbReference type="GeneID" id="493301"/>
<dbReference type="KEGG" id="xtr:493301"/>
<dbReference type="AGR" id="Xenbase:XB-GENE-5813560"/>
<dbReference type="CTD" id="57721"/>
<dbReference type="Xenbase" id="XB-GENE-5813560">
    <property type="gene designation" value="mettl14"/>
</dbReference>
<dbReference type="eggNOG" id="KOG2097">
    <property type="taxonomic scope" value="Eukaryota"/>
</dbReference>
<dbReference type="HOGENOM" id="CLU_046318_1_0_1"/>
<dbReference type="InParanoid" id="Q66KJ9"/>
<dbReference type="OMA" id="FNSELYQ"/>
<dbReference type="OrthoDB" id="14833at2759"/>
<dbReference type="PhylomeDB" id="Q66KJ9"/>
<dbReference type="TreeFam" id="TF323641"/>
<dbReference type="Reactome" id="R-XTR-72203">
    <property type="pathway name" value="Processing of Capped Intron-Containing Pre-mRNA"/>
</dbReference>
<dbReference type="Proteomes" id="UP000008143">
    <property type="component" value="Chromosome 1"/>
</dbReference>
<dbReference type="Bgee" id="ENSXETG00000004037">
    <property type="expression patterns" value="Expressed in early embryo and 13 other cell types or tissues"/>
</dbReference>
<dbReference type="GO" id="GO:0005634">
    <property type="term" value="C:nucleus"/>
    <property type="evidence" value="ECO:0000250"/>
    <property type="project" value="UniProtKB"/>
</dbReference>
<dbReference type="GO" id="GO:0036396">
    <property type="term" value="C:RNA N6-methyladenosine methyltransferase complex"/>
    <property type="evidence" value="ECO:0000250"/>
    <property type="project" value="UniProtKB"/>
</dbReference>
<dbReference type="GO" id="GO:0003729">
    <property type="term" value="F:mRNA binding"/>
    <property type="evidence" value="ECO:0000250"/>
    <property type="project" value="UniProtKB"/>
</dbReference>
<dbReference type="GO" id="GO:0001734">
    <property type="term" value="F:mRNA m(6)A methyltransferase activity"/>
    <property type="evidence" value="ECO:0000250"/>
    <property type="project" value="UniProtKB"/>
</dbReference>
<dbReference type="GO" id="GO:0021861">
    <property type="term" value="P:forebrain radial glial cell differentiation"/>
    <property type="evidence" value="ECO:0000250"/>
    <property type="project" value="UniProtKB"/>
</dbReference>
<dbReference type="GO" id="GO:0042063">
    <property type="term" value="P:gliogenesis"/>
    <property type="evidence" value="ECO:0000250"/>
    <property type="project" value="UniProtKB"/>
</dbReference>
<dbReference type="GO" id="GO:0061157">
    <property type="term" value="P:mRNA destabilization"/>
    <property type="evidence" value="ECO:0000250"/>
    <property type="project" value="UniProtKB"/>
</dbReference>
<dbReference type="GO" id="GO:0006397">
    <property type="term" value="P:mRNA processing"/>
    <property type="evidence" value="ECO:0000250"/>
    <property type="project" value="UniProtKB"/>
</dbReference>
<dbReference type="GO" id="GO:0000398">
    <property type="term" value="P:mRNA splicing, via spliceosome"/>
    <property type="evidence" value="ECO:0000250"/>
    <property type="project" value="UniProtKB"/>
</dbReference>
<dbReference type="GO" id="GO:0001510">
    <property type="term" value="P:RNA methylation"/>
    <property type="evidence" value="ECO:0000250"/>
    <property type="project" value="UniProtKB"/>
</dbReference>
<dbReference type="GO" id="GO:0007283">
    <property type="term" value="P:spermatogenesis"/>
    <property type="evidence" value="ECO:0000250"/>
    <property type="project" value="UniProtKB"/>
</dbReference>
<dbReference type="GO" id="GO:0019827">
    <property type="term" value="P:stem cell population maintenance"/>
    <property type="evidence" value="ECO:0000250"/>
    <property type="project" value="UniProtKB"/>
</dbReference>
<dbReference type="InterPro" id="IPR045123">
    <property type="entry name" value="METTL14-like"/>
</dbReference>
<dbReference type="InterPro" id="IPR007757">
    <property type="entry name" value="MT-A70-like"/>
</dbReference>
<dbReference type="PANTHER" id="PTHR13107">
    <property type="entry name" value="N6-ADENOSINE-METHYLTRANSFERASE NON-CATALYTIC SUBUNIT"/>
    <property type="match status" value="1"/>
</dbReference>
<dbReference type="PANTHER" id="PTHR13107:SF0">
    <property type="entry name" value="N6-ADENOSINE-METHYLTRANSFERASE NON-CATALYTIC SUBUNIT"/>
    <property type="match status" value="1"/>
</dbReference>
<dbReference type="Pfam" id="PF05063">
    <property type="entry name" value="MT-A70"/>
    <property type="match status" value="1"/>
</dbReference>
<dbReference type="PROSITE" id="PS51143">
    <property type="entry name" value="MT_A70"/>
    <property type="match status" value="1"/>
</dbReference>
<dbReference type="PROSITE" id="PS51592">
    <property type="entry name" value="SAM_MTA70L_2"/>
    <property type="match status" value="1"/>
</dbReference>
<evidence type="ECO:0000250" key="1">
    <source>
        <dbReference type="UniProtKB" id="Q3UIK4"/>
    </source>
</evidence>
<evidence type="ECO:0000250" key="2">
    <source>
        <dbReference type="UniProtKB" id="Q9HCE5"/>
    </source>
</evidence>
<evidence type="ECO:0000255" key="3">
    <source>
        <dbReference type="PROSITE-ProRule" id="PRU00489"/>
    </source>
</evidence>
<evidence type="ECO:0000256" key="4">
    <source>
        <dbReference type="SAM" id="MobiDB-lite"/>
    </source>
</evidence>
<comment type="function">
    <text evidence="1 2">The METTL3-METTL14 heterodimer forms a N6-methyltransferase complex that methylates adenosine residues at the N(6) position of some mRNAs and regulates the circadian clock, differentiation of embryonic stem cells and cortical neurogenesis. In the heterodimer formed with mettl3, mettl14 constitutes the RNA-binding scaffold that recognizes the substrate rather than the catalytic core. N6-methyladenosine (m6A), which takes place at the 5'-[AG]GAC-3' consensus sites of some mRNAs, plays a role in mRNA stability and processing.</text>
</comment>
<comment type="subunit">
    <text evidence="2">Heterodimer; heterodimerizes with mettl3 to form an antiparallel heterodimer that constitutes an active methyltransferase. Component of the WMM complex, a N6-methyltransferase complex composed of a catalytic subcomplex, named MAC, and of an associated subcomplex, named MACOM. The MAC subcomplex is composed of mettl3 and mettl14.</text>
</comment>
<comment type="subcellular location">
    <subcellularLocation>
        <location evidence="1">Nucleus</location>
    </subcellularLocation>
</comment>
<comment type="similarity">
    <text evidence="3">Belongs to the MT-A70-like family.</text>
</comment>
<sequence>MNSRLQEIRARQTLRRKLLAQQLGAESADSIGAVLNSKDEQREIAETRETSRASYDTSATVSKRKMPEEGEADEEVIEECKDAVEPQKEEENLPYREEIYKDSSTFLKGTQSLNPHNDYCQHFVDTGHRPQNFIRDVGLADRFEEYPKLRELIRLKDELISKSNTPPMYLQADLESFDLRELKSEFDVILLEPPLEEYFRETGIAANEKWWTWEDIMKLDIEGIAGSRAFVFLWCGSGEGLDFGRMCLRKWGFRRSEDICWIKTNKDNPGKTKTLDPKAIFQRTKEHCLMGIKGTVHRSTDGDFIHANVDIDLIITEEPEIGNIEKPVEIFHIIEHFCLGRRRLHLFGRDSTIRPGWLTVGPTLTNSNFNSETYASYFNTPNSPLTGCTEEIERLRPKTPPPKSDRGFGASRGGGRGGPSAGRGERGRERNRGSFRGDRGNFRGRGGPHRGVFAPR</sequence>
<reference key="1">
    <citation type="submission" date="2004-08" db="EMBL/GenBank/DDBJ databases">
        <authorList>
            <consortium name="NIH - Xenopus Gene Collection (XGC) project"/>
        </authorList>
    </citation>
    <scope>NUCLEOTIDE SEQUENCE [LARGE SCALE MRNA]</scope>
    <source>
        <tissue>Embryo</tissue>
    </source>
</reference>
<protein>
    <recommendedName>
        <fullName>N(6)-adenosine-methyltransferase non-catalytic subunit METTL14</fullName>
    </recommendedName>
    <alternativeName>
        <fullName>Methyltransferase-like protein 14</fullName>
    </alternativeName>
</protein>